<name>RS6A_SCHPO</name>
<keyword id="KW-0963">Cytoplasm</keyword>
<keyword id="KW-0903">Direct protein sequencing</keyword>
<keyword id="KW-0597">Phosphoprotein</keyword>
<keyword id="KW-1185">Reference proteome</keyword>
<keyword id="KW-0687">Ribonucleoprotein</keyword>
<keyword id="KW-0689">Ribosomal protein</keyword>
<comment type="function">
    <text evidence="1">Component of the ribosome, a large ribonucleoprotein complex responsible for the synthesis of proteins in the cell. The small ribosomal subunit (SSU) binds messenger RNAs (mRNAs) and translates the encoded message by selecting cognate aminoacyl-transfer RNA (tRNA) molecules. The large subunit (LSU) contains the ribosomal catalytic site termed the peptidyl transferase center (PTC), which catalyzes the formation of peptide bonds, thereby polymerizing the amino acids delivered by tRNAs into a polypeptide chain. The nascent polypeptides leave the ribosome through a tunnel in the LSU and interact with protein factors that function in enzymatic processing, targeting, and the membrane insertion of nascent chains at the exit of the ribosomal tunnel. eS6 is involved in nucleolar processing of pre-18S ribosomal RNA and ribosome assembly.</text>
</comment>
<comment type="subunit">
    <text evidence="1">Component of the small ribosomal subunit (SSU). Mature yeast ribosomes consist of a small (40S) and a large (60S) subunit. The 40S small subunit contains 1 molecule of ribosomal RNA (18S rRNA) and at least 33 different proteins. The large 60S subunit contains 3 rRNA molecules (25S, 5.8S and 5S rRNA) and at least 46 different proteins. Interacts with snoRNA U3. uS11 interacts with MPP10. Component of the ribosomal small subunit (SSU) processome composed of at least 40 protein subunits and snoRNA U3.</text>
</comment>
<comment type="subcellular location">
    <subcellularLocation>
        <location evidence="3">Cytoplasm</location>
    </subcellularLocation>
</comment>
<comment type="PTM">
    <text>Phosphorylated.</text>
</comment>
<comment type="miscellaneous">
    <text>There are 2 genes for eS6 in S.pombe.</text>
</comment>
<comment type="similarity">
    <text evidence="5">Belongs to the eukaryotic ribosomal protein eS6 family.</text>
</comment>
<proteinExistence type="evidence at protein level"/>
<reference key="1">
    <citation type="journal article" date="1988" name="Curr. Genet.">
        <title>Primary structure of the ribosomal protein gene S6 from Schizosaccharomyces pombe.</title>
        <authorList>
            <person name="Gross T."/>
            <person name="Nischt R."/>
            <person name="Gatermann K."/>
            <person name="Swida U."/>
            <person name="Kaeufer N.F."/>
        </authorList>
    </citation>
    <scope>NUCLEOTIDE SEQUENCE [GENOMIC DNA]</scope>
</reference>
<reference key="2">
    <citation type="journal article" date="2002" name="Nature">
        <title>The genome sequence of Schizosaccharomyces pombe.</title>
        <authorList>
            <person name="Wood V."/>
            <person name="Gwilliam R."/>
            <person name="Rajandream M.A."/>
            <person name="Lyne M.H."/>
            <person name="Lyne R."/>
            <person name="Stewart A."/>
            <person name="Sgouros J.G."/>
            <person name="Peat N."/>
            <person name="Hayles J."/>
            <person name="Baker S.G."/>
            <person name="Basham D."/>
            <person name="Bowman S."/>
            <person name="Brooks K."/>
            <person name="Brown D."/>
            <person name="Brown S."/>
            <person name="Chillingworth T."/>
            <person name="Churcher C.M."/>
            <person name="Collins M."/>
            <person name="Connor R."/>
            <person name="Cronin A."/>
            <person name="Davis P."/>
            <person name="Feltwell T."/>
            <person name="Fraser A."/>
            <person name="Gentles S."/>
            <person name="Goble A."/>
            <person name="Hamlin N."/>
            <person name="Harris D.E."/>
            <person name="Hidalgo J."/>
            <person name="Hodgson G."/>
            <person name="Holroyd S."/>
            <person name="Hornsby T."/>
            <person name="Howarth S."/>
            <person name="Huckle E.J."/>
            <person name="Hunt S."/>
            <person name="Jagels K."/>
            <person name="James K.D."/>
            <person name="Jones L."/>
            <person name="Jones M."/>
            <person name="Leather S."/>
            <person name="McDonald S."/>
            <person name="McLean J."/>
            <person name="Mooney P."/>
            <person name="Moule S."/>
            <person name="Mungall K.L."/>
            <person name="Murphy L.D."/>
            <person name="Niblett D."/>
            <person name="Odell C."/>
            <person name="Oliver K."/>
            <person name="O'Neil S."/>
            <person name="Pearson D."/>
            <person name="Quail M.A."/>
            <person name="Rabbinowitsch E."/>
            <person name="Rutherford K.M."/>
            <person name="Rutter S."/>
            <person name="Saunders D."/>
            <person name="Seeger K."/>
            <person name="Sharp S."/>
            <person name="Skelton J."/>
            <person name="Simmonds M.N."/>
            <person name="Squares R."/>
            <person name="Squares S."/>
            <person name="Stevens K."/>
            <person name="Taylor K."/>
            <person name="Taylor R.G."/>
            <person name="Tivey A."/>
            <person name="Walsh S.V."/>
            <person name="Warren T."/>
            <person name="Whitehead S."/>
            <person name="Woodward J.R."/>
            <person name="Volckaert G."/>
            <person name="Aert R."/>
            <person name="Robben J."/>
            <person name="Grymonprez B."/>
            <person name="Weltjens I."/>
            <person name="Vanstreels E."/>
            <person name="Rieger M."/>
            <person name="Schaefer M."/>
            <person name="Mueller-Auer S."/>
            <person name="Gabel C."/>
            <person name="Fuchs M."/>
            <person name="Duesterhoeft A."/>
            <person name="Fritzc C."/>
            <person name="Holzer E."/>
            <person name="Moestl D."/>
            <person name="Hilbert H."/>
            <person name="Borzym K."/>
            <person name="Langer I."/>
            <person name="Beck A."/>
            <person name="Lehrach H."/>
            <person name="Reinhardt R."/>
            <person name="Pohl T.M."/>
            <person name="Eger P."/>
            <person name="Zimmermann W."/>
            <person name="Wedler H."/>
            <person name="Wambutt R."/>
            <person name="Purnelle B."/>
            <person name="Goffeau A."/>
            <person name="Cadieu E."/>
            <person name="Dreano S."/>
            <person name="Gloux S."/>
            <person name="Lelaure V."/>
            <person name="Mottier S."/>
            <person name="Galibert F."/>
            <person name="Aves S.J."/>
            <person name="Xiang Z."/>
            <person name="Hunt C."/>
            <person name="Moore K."/>
            <person name="Hurst S.M."/>
            <person name="Lucas M."/>
            <person name="Rochet M."/>
            <person name="Gaillardin C."/>
            <person name="Tallada V.A."/>
            <person name="Garzon A."/>
            <person name="Thode G."/>
            <person name="Daga R.R."/>
            <person name="Cruzado L."/>
            <person name="Jimenez J."/>
            <person name="Sanchez M."/>
            <person name="del Rey F."/>
            <person name="Benito J."/>
            <person name="Dominguez A."/>
            <person name="Revuelta J.L."/>
            <person name="Moreno S."/>
            <person name="Armstrong J."/>
            <person name="Forsburg S.L."/>
            <person name="Cerutti L."/>
            <person name="Lowe T."/>
            <person name="McCombie W.R."/>
            <person name="Paulsen I."/>
            <person name="Potashkin J."/>
            <person name="Shpakovski G.V."/>
            <person name="Ussery D."/>
            <person name="Barrell B.G."/>
            <person name="Nurse P."/>
        </authorList>
    </citation>
    <scope>NUCLEOTIDE SEQUENCE [LARGE SCALE GENOMIC DNA]</scope>
    <source>
        <strain>972 / ATCC 24843</strain>
    </source>
</reference>
<reference key="3">
    <citation type="journal article" date="1983" name="Mol. Gen. Genet.">
        <title>Yeast ribosomal proteins: VII. Cytoplasmic ribosomal proteins from Schizosaccharomyces pombe.</title>
        <authorList>
            <person name="Otaka E."/>
            <person name="Higo K."/>
            <person name="Itoh T."/>
        </authorList>
    </citation>
    <scope>PROTEIN SEQUENCE OF 1-40</scope>
</reference>
<reference key="4">
    <citation type="journal article" date="2006" name="Nat. Biotechnol.">
        <title>ORFeome cloning and global analysis of protein localization in the fission yeast Schizosaccharomyces pombe.</title>
        <authorList>
            <person name="Matsuyama A."/>
            <person name="Arai R."/>
            <person name="Yashiroda Y."/>
            <person name="Shirai A."/>
            <person name="Kamata A."/>
            <person name="Sekido S."/>
            <person name="Kobayashi Y."/>
            <person name="Hashimoto A."/>
            <person name="Hamamoto M."/>
            <person name="Hiraoka Y."/>
            <person name="Horinouchi S."/>
            <person name="Yoshida M."/>
        </authorList>
    </citation>
    <scope>SUBCELLULAR LOCATION [LARGE SCALE ANALYSIS]</scope>
</reference>
<evidence type="ECO:0000250" key="1">
    <source>
        <dbReference type="UniProtKB" id="P0CX37"/>
    </source>
</evidence>
<evidence type="ECO:0000255" key="2"/>
<evidence type="ECO:0000269" key="3">
    <source>
    </source>
</evidence>
<evidence type="ECO:0000303" key="4">
    <source>
    </source>
</evidence>
<evidence type="ECO:0000305" key="5"/>
<organism>
    <name type="scientific">Schizosaccharomyces pombe (strain 972 / ATCC 24843)</name>
    <name type="common">Fission yeast</name>
    <dbReference type="NCBI Taxonomy" id="284812"/>
    <lineage>
        <taxon>Eukaryota</taxon>
        <taxon>Fungi</taxon>
        <taxon>Dikarya</taxon>
        <taxon>Ascomycota</taxon>
        <taxon>Taphrinomycotina</taxon>
        <taxon>Schizosaccharomycetes</taxon>
        <taxon>Schizosaccharomycetales</taxon>
        <taxon>Schizosaccharomycetaceae</taxon>
        <taxon>Schizosaccharomyces</taxon>
    </lineage>
</organism>
<protein>
    <recommendedName>
        <fullName evidence="5">Small ribosomal subunit protein eS6A</fullName>
    </recommendedName>
    <alternativeName>
        <fullName>40S ribosomal protein S6-A</fullName>
    </alternativeName>
    <alternativeName>
        <fullName evidence="4">SP-S6</fullName>
    </alternativeName>
</protein>
<sequence length="239" mass="27499">MKLNISYPANGTQKLIEIDDDRRLRVFMEKRMGQEVPGDSVGPEFAGYVFKITGGNDKQGFPMFQGVLLPHRVRLLLRAGHPCYRPRRDGERKRKSVRGCIVGQDLAVLALAIIKQGEQDIPGLTDVTVPKRLGPKRASKIRRFFNLSKEDDVRQFVIRREVVPKKEGKKPYTKAPKIQRLVTPRTLQHKRHRFALKRRQAEKNREEAAEFAQLMAKRVAEAKQKREVVKARRASSLKK</sequence>
<gene>
    <name type="primary">rps601</name>
    <name type="synonym">rps6</name>
    <name type="synonym">rps6a</name>
    <name type="ORF">SPAC13G6.07c</name>
</gene>
<feature type="chain" id="PRO_0000137339" description="Small ribosomal subunit protein eS6A">
    <location>
        <begin position="1"/>
        <end position="239"/>
    </location>
</feature>
<feature type="modified residue" description="Phosphoserine" evidence="2">
    <location>
        <position position="235"/>
    </location>
</feature>
<feature type="modified residue" description="Phosphoserine" evidence="2">
    <location>
        <position position="236"/>
    </location>
</feature>
<accession>P05752</accession>
<dbReference type="EMBL" id="M36382">
    <property type="protein sequence ID" value="AAA35338.1"/>
    <property type="molecule type" value="Genomic_DNA"/>
</dbReference>
<dbReference type="EMBL" id="CU329670">
    <property type="protein sequence ID" value="CAA91100.1"/>
    <property type="molecule type" value="Genomic_DNA"/>
</dbReference>
<dbReference type="PIR" id="S06463">
    <property type="entry name" value="R3ZP6E"/>
</dbReference>
<dbReference type="RefSeq" id="NP_592833.1">
    <property type="nucleotide sequence ID" value="NM_001018234.2"/>
</dbReference>
<dbReference type="SMR" id="P05752"/>
<dbReference type="BioGRID" id="279315">
    <property type="interactions" value="4"/>
</dbReference>
<dbReference type="FunCoup" id="P05752">
    <property type="interactions" value="737"/>
</dbReference>
<dbReference type="IntAct" id="P05752">
    <property type="interactions" value="2"/>
</dbReference>
<dbReference type="STRING" id="284812.P05752"/>
<dbReference type="iPTMnet" id="P05752"/>
<dbReference type="PaxDb" id="4896-SPAC13G6.07c.1"/>
<dbReference type="EnsemblFungi" id="SPAC13G6.07c.1">
    <property type="protein sequence ID" value="SPAC13G6.07c.1:pep"/>
    <property type="gene ID" value="SPAC13G6.07c"/>
</dbReference>
<dbReference type="GeneID" id="2542870"/>
<dbReference type="KEGG" id="spo:2542870"/>
<dbReference type="PomBase" id="SPAC13G6.07c">
    <property type="gene designation" value="rps601"/>
</dbReference>
<dbReference type="VEuPathDB" id="FungiDB:SPAC13G6.07c"/>
<dbReference type="eggNOG" id="KOG1646">
    <property type="taxonomic scope" value="Eukaryota"/>
</dbReference>
<dbReference type="HOGENOM" id="CLU_046346_0_1_1"/>
<dbReference type="InParanoid" id="P05752"/>
<dbReference type="OMA" id="YVITHEK"/>
<dbReference type="PhylomeDB" id="P05752"/>
<dbReference type="PRO" id="PR:P05752"/>
<dbReference type="Proteomes" id="UP000002485">
    <property type="component" value="Chromosome I"/>
</dbReference>
<dbReference type="GO" id="GO:0005829">
    <property type="term" value="C:cytosol"/>
    <property type="evidence" value="ECO:0007005"/>
    <property type="project" value="PomBase"/>
</dbReference>
<dbReference type="GO" id="GO:0022627">
    <property type="term" value="C:cytosolic small ribosomal subunit"/>
    <property type="evidence" value="ECO:0000266"/>
    <property type="project" value="PomBase"/>
</dbReference>
<dbReference type="GO" id="GO:0003735">
    <property type="term" value="F:structural constituent of ribosome"/>
    <property type="evidence" value="ECO:0000266"/>
    <property type="project" value="PomBase"/>
</dbReference>
<dbReference type="GO" id="GO:0002181">
    <property type="term" value="P:cytoplasmic translation"/>
    <property type="evidence" value="ECO:0000266"/>
    <property type="project" value="PomBase"/>
</dbReference>
<dbReference type="GO" id="GO:0042254">
    <property type="term" value="P:ribosome biogenesis"/>
    <property type="evidence" value="ECO:0000266"/>
    <property type="project" value="PomBase"/>
</dbReference>
<dbReference type="FunFam" id="1.20.5.2650:FF:000001">
    <property type="entry name" value="40S ribosomal protein S6"/>
    <property type="match status" value="1"/>
</dbReference>
<dbReference type="Gene3D" id="1.20.5.2650">
    <property type="match status" value="1"/>
</dbReference>
<dbReference type="InterPro" id="IPR001377">
    <property type="entry name" value="Ribosomal_eS6"/>
</dbReference>
<dbReference type="InterPro" id="IPR014401">
    <property type="entry name" value="Ribosomal_eS6-like"/>
</dbReference>
<dbReference type="InterPro" id="IPR018282">
    <property type="entry name" value="Ribosomal_eS6_CS"/>
</dbReference>
<dbReference type="PANTHER" id="PTHR11502">
    <property type="entry name" value="40S RIBOSOMAL PROTEIN S6"/>
    <property type="match status" value="1"/>
</dbReference>
<dbReference type="Pfam" id="PF01092">
    <property type="entry name" value="Ribosomal_S6e"/>
    <property type="match status" value="1"/>
</dbReference>
<dbReference type="PIRSF" id="PIRSF002129">
    <property type="entry name" value="Ribosom_S6_euk"/>
    <property type="match status" value="1"/>
</dbReference>
<dbReference type="SMART" id="SM01405">
    <property type="entry name" value="Ribosomal_S6e"/>
    <property type="match status" value="1"/>
</dbReference>
<dbReference type="PROSITE" id="PS00578">
    <property type="entry name" value="RIBOSOMAL_S6E"/>
    <property type="match status" value="1"/>
</dbReference>